<protein>
    <recommendedName>
        <fullName evidence="1">UPF0434 protein Pnec_0311</fullName>
    </recommendedName>
</protein>
<comment type="similarity">
    <text evidence="1">Belongs to the UPF0434 family.</text>
</comment>
<reference key="1">
    <citation type="journal article" date="2013" name="Proc. Natl. Acad. Sci. U.S.A.">
        <title>Polynucleobacter necessarius, a model for genome reduction in both free-living and symbiotic bacteria.</title>
        <authorList>
            <person name="Boscaro V."/>
            <person name="Felletti M."/>
            <person name="Vannini C."/>
            <person name="Ackerman M.S."/>
            <person name="Chain P.S."/>
            <person name="Malfatti S."/>
            <person name="Vergez L.M."/>
            <person name="Shin M."/>
            <person name="Doak T.G."/>
            <person name="Lynch M."/>
            <person name="Petroni G."/>
        </authorList>
    </citation>
    <scope>NUCLEOTIDE SEQUENCE [LARGE SCALE GENOMIC DNA]</scope>
    <source>
        <strain>STIR1</strain>
    </source>
</reference>
<sequence length="59" mass="6636">MDKRLLDILVCPLCKSQLHLDANKQELICKADRLAYPIRDDVPVTLVDEARSLSADEIA</sequence>
<gene>
    <name type="ordered locus">Pnec_0311</name>
</gene>
<feature type="chain" id="PRO_1000138319" description="UPF0434 protein Pnec_0311">
    <location>
        <begin position="1"/>
        <end position="59"/>
    </location>
</feature>
<dbReference type="EMBL" id="CP001010">
    <property type="protein sequence ID" value="ACB43604.1"/>
    <property type="molecule type" value="Genomic_DNA"/>
</dbReference>
<dbReference type="SMR" id="B1XTC7"/>
<dbReference type="STRING" id="452638.Pnec_0311"/>
<dbReference type="KEGG" id="pne:Pnec_0311"/>
<dbReference type="eggNOG" id="COG2835">
    <property type="taxonomic scope" value="Bacteria"/>
</dbReference>
<dbReference type="HOGENOM" id="CLU_155659_3_1_4"/>
<dbReference type="OrthoDB" id="9812205at2"/>
<dbReference type="GO" id="GO:0005829">
    <property type="term" value="C:cytosol"/>
    <property type="evidence" value="ECO:0007669"/>
    <property type="project" value="TreeGrafter"/>
</dbReference>
<dbReference type="FunFam" id="2.20.25.10:FF:000002">
    <property type="entry name" value="UPF0434 protein YcaR"/>
    <property type="match status" value="1"/>
</dbReference>
<dbReference type="Gene3D" id="2.20.25.10">
    <property type="match status" value="1"/>
</dbReference>
<dbReference type="HAMAP" id="MF_01187">
    <property type="entry name" value="UPF0434"/>
    <property type="match status" value="1"/>
</dbReference>
<dbReference type="InterPro" id="IPR005651">
    <property type="entry name" value="Trm112-like"/>
</dbReference>
<dbReference type="PANTHER" id="PTHR33505:SF4">
    <property type="entry name" value="PROTEIN PREY, MITOCHONDRIAL"/>
    <property type="match status" value="1"/>
</dbReference>
<dbReference type="PANTHER" id="PTHR33505">
    <property type="entry name" value="ZGC:162634"/>
    <property type="match status" value="1"/>
</dbReference>
<dbReference type="Pfam" id="PF03966">
    <property type="entry name" value="Trm112p"/>
    <property type="match status" value="1"/>
</dbReference>
<dbReference type="SUPFAM" id="SSF158997">
    <property type="entry name" value="Trm112p-like"/>
    <property type="match status" value="1"/>
</dbReference>
<accession>B1XTC7</accession>
<proteinExistence type="inferred from homology"/>
<name>Y311_POLNS</name>
<organism>
    <name type="scientific">Polynucleobacter necessarius subsp. necessarius (strain STIR1)</name>
    <dbReference type="NCBI Taxonomy" id="452638"/>
    <lineage>
        <taxon>Bacteria</taxon>
        <taxon>Pseudomonadati</taxon>
        <taxon>Pseudomonadota</taxon>
        <taxon>Betaproteobacteria</taxon>
        <taxon>Burkholderiales</taxon>
        <taxon>Burkholderiaceae</taxon>
        <taxon>Polynucleobacter</taxon>
    </lineage>
</organism>
<evidence type="ECO:0000255" key="1">
    <source>
        <dbReference type="HAMAP-Rule" id="MF_01187"/>
    </source>
</evidence>